<name>RUVA_CALS8</name>
<gene>
    <name evidence="1" type="primary">ruvA</name>
    <name type="ordered locus">Csac_1565</name>
</gene>
<proteinExistence type="inferred from homology"/>
<organism>
    <name type="scientific">Caldicellulosiruptor saccharolyticus (strain ATCC 43494 / DSM 8903 / Tp8T 6331)</name>
    <dbReference type="NCBI Taxonomy" id="351627"/>
    <lineage>
        <taxon>Bacteria</taxon>
        <taxon>Bacillati</taxon>
        <taxon>Bacillota</taxon>
        <taxon>Bacillota incertae sedis</taxon>
        <taxon>Caldicellulosiruptorales</taxon>
        <taxon>Caldicellulosiruptoraceae</taxon>
        <taxon>Caldicellulosiruptor</taxon>
    </lineage>
</organism>
<dbReference type="EMBL" id="CP000679">
    <property type="protein sequence ID" value="ABP67157.1"/>
    <property type="molecule type" value="Genomic_DNA"/>
</dbReference>
<dbReference type="RefSeq" id="WP_011917092.1">
    <property type="nucleotide sequence ID" value="NC_009437.1"/>
</dbReference>
<dbReference type="SMR" id="A4XJS2"/>
<dbReference type="STRING" id="351627.Csac_1565"/>
<dbReference type="KEGG" id="csc:Csac_1565"/>
<dbReference type="eggNOG" id="COG0632">
    <property type="taxonomic scope" value="Bacteria"/>
</dbReference>
<dbReference type="HOGENOM" id="CLU_087936_3_0_9"/>
<dbReference type="OrthoDB" id="5293449at2"/>
<dbReference type="Proteomes" id="UP000000256">
    <property type="component" value="Chromosome"/>
</dbReference>
<dbReference type="GO" id="GO:0005737">
    <property type="term" value="C:cytoplasm"/>
    <property type="evidence" value="ECO:0007669"/>
    <property type="project" value="UniProtKB-SubCell"/>
</dbReference>
<dbReference type="GO" id="GO:0009379">
    <property type="term" value="C:Holliday junction helicase complex"/>
    <property type="evidence" value="ECO:0007669"/>
    <property type="project" value="InterPro"/>
</dbReference>
<dbReference type="GO" id="GO:0048476">
    <property type="term" value="C:Holliday junction resolvase complex"/>
    <property type="evidence" value="ECO:0007669"/>
    <property type="project" value="UniProtKB-UniRule"/>
</dbReference>
<dbReference type="GO" id="GO:0005524">
    <property type="term" value="F:ATP binding"/>
    <property type="evidence" value="ECO:0007669"/>
    <property type="project" value="InterPro"/>
</dbReference>
<dbReference type="GO" id="GO:0000400">
    <property type="term" value="F:four-way junction DNA binding"/>
    <property type="evidence" value="ECO:0007669"/>
    <property type="project" value="UniProtKB-UniRule"/>
</dbReference>
<dbReference type="GO" id="GO:0009378">
    <property type="term" value="F:four-way junction helicase activity"/>
    <property type="evidence" value="ECO:0007669"/>
    <property type="project" value="InterPro"/>
</dbReference>
<dbReference type="GO" id="GO:0006310">
    <property type="term" value="P:DNA recombination"/>
    <property type="evidence" value="ECO:0007669"/>
    <property type="project" value="UniProtKB-UniRule"/>
</dbReference>
<dbReference type="GO" id="GO:0006281">
    <property type="term" value="P:DNA repair"/>
    <property type="evidence" value="ECO:0007669"/>
    <property type="project" value="UniProtKB-UniRule"/>
</dbReference>
<dbReference type="CDD" id="cd14332">
    <property type="entry name" value="UBA_RuvA_C"/>
    <property type="match status" value="1"/>
</dbReference>
<dbReference type="Gene3D" id="1.10.150.20">
    <property type="entry name" value="5' to 3' exonuclease, C-terminal subdomain"/>
    <property type="match status" value="1"/>
</dbReference>
<dbReference type="Gene3D" id="2.40.50.140">
    <property type="entry name" value="Nucleic acid-binding proteins"/>
    <property type="match status" value="1"/>
</dbReference>
<dbReference type="HAMAP" id="MF_00031">
    <property type="entry name" value="DNA_HJ_migration_RuvA"/>
    <property type="match status" value="1"/>
</dbReference>
<dbReference type="InterPro" id="IPR013849">
    <property type="entry name" value="DNA_helicase_Holl-junc_RuvA_I"/>
</dbReference>
<dbReference type="InterPro" id="IPR003583">
    <property type="entry name" value="Hlx-hairpin-Hlx_DNA-bd_motif"/>
</dbReference>
<dbReference type="InterPro" id="IPR012340">
    <property type="entry name" value="NA-bd_OB-fold"/>
</dbReference>
<dbReference type="InterPro" id="IPR000085">
    <property type="entry name" value="RuvA"/>
</dbReference>
<dbReference type="InterPro" id="IPR010994">
    <property type="entry name" value="RuvA_2-like"/>
</dbReference>
<dbReference type="InterPro" id="IPR011114">
    <property type="entry name" value="RuvA_C"/>
</dbReference>
<dbReference type="InterPro" id="IPR036267">
    <property type="entry name" value="RuvA_C_sf"/>
</dbReference>
<dbReference type="NCBIfam" id="TIGR00084">
    <property type="entry name" value="ruvA"/>
    <property type="match status" value="1"/>
</dbReference>
<dbReference type="Pfam" id="PF14520">
    <property type="entry name" value="HHH_5"/>
    <property type="match status" value="1"/>
</dbReference>
<dbReference type="Pfam" id="PF07499">
    <property type="entry name" value="RuvA_C"/>
    <property type="match status" value="1"/>
</dbReference>
<dbReference type="Pfam" id="PF01330">
    <property type="entry name" value="RuvA_N"/>
    <property type="match status" value="1"/>
</dbReference>
<dbReference type="SMART" id="SM00278">
    <property type="entry name" value="HhH1"/>
    <property type="match status" value="2"/>
</dbReference>
<dbReference type="SUPFAM" id="SSF46929">
    <property type="entry name" value="DNA helicase RuvA subunit, C-terminal domain"/>
    <property type="match status" value="1"/>
</dbReference>
<dbReference type="SUPFAM" id="SSF47781">
    <property type="entry name" value="RuvA domain 2-like"/>
    <property type="match status" value="1"/>
</dbReference>
<sequence length="197" mass="22409">MIDSIVGTIQEVFNNYVILNYNNIYIKIFCNSTKFSEFLGKEKRVYVSLKFNENLSELECYGFLTREERELFLKLQKVTGVGSKLALQILSSIDYQQLIVEIAKGNVARLEKVKGIGKKTASRIILELKETLKKEFKVASTSGTEEKTYEKLEEISLALLSLGYEIDEINQVLSSEDFSELSLEDGIKLALKKLSKI</sequence>
<keyword id="KW-0963">Cytoplasm</keyword>
<keyword id="KW-0227">DNA damage</keyword>
<keyword id="KW-0233">DNA recombination</keyword>
<keyword id="KW-0234">DNA repair</keyword>
<keyword id="KW-0238">DNA-binding</keyword>
<reference key="1">
    <citation type="submission" date="2007-04" db="EMBL/GenBank/DDBJ databases">
        <title>Genome sequence of the thermophilic hydrogen-producing bacterium Caldicellulosiruptor saccharolyticus DSM 8903.</title>
        <authorList>
            <person name="Copeland A."/>
            <person name="Lucas S."/>
            <person name="Lapidus A."/>
            <person name="Barry K."/>
            <person name="Detter J.C."/>
            <person name="Glavina del Rio T."/>
            <person name="Hammon N."/>
            <person name="Israni S."/>
            <person name="Dalin E."/>
            <person name="Tice H."/>
            <person name="Pitluck S."/>
            <person name="Kiss H."/>
            <person name="Brettin T."/>
            <person name="Bruce D."/>
            <person name="Han C."/>
            <person name="Schmutz J."/>
            <person name="Larimer F."/>
            <person name="Land M."/>
            <person name="Hauser L."/>
            <person name="Kyrpides N."/>
            <person name="Lykidis A."/>
            <person name="van de Werken H.J.G."/>
            <person name="Verhaart M.R.A."/>
            <person name="VanFossen A.L."/>
            <person name="Lewis D.L."/>
            <person name="Nichols J.D."/>
            <person name="Goorissen H.P."/>
            <person name="van Niel E.W.J."/>
            <person name="Stams F.J.M."/>
            <person name="Willquist K.U."/>
            <person name="Ward D.E."/>
            <person name="van der Oost J."/>
            <person name="Kelly R.M."/>
            <person name="Kengen S.M.W."/>
            <person name="Richardson P."/>
        </authorList>
    </citation>
    <scope>NUCLEOTIDE SEQUENCE [LARGE SCALE GENOMIC DNA]</scope>
    <source>
        <strain>ATCC 43494 / DSM 8903 / Tp8T 6331</strain>
    </source>
</reference>
<feature type="chain" id="PRO_1000002419" description="Holliday junction branch migration complex subunit RuvA">
    <location>
        <begin position="1"/>
        <end position="197"/>
    </location>
</feature>
<feature type="region of interest" description="Domain I" evidence="1">
    <location>
        <begin position="1"/>
        <end position="64"/>
    </location>
</feature>
<feature type="region of interest" description="Domain II" evidence="1">
    <location>
        <begin position="65"/>
        <end position="143"/>
    </location>
</feature>
<feature type="region of interest" description="Flexible linker" evidence="1">
    <location>
        <begin position="144"/>
        <end position="152"/>
    </location>
</feature>
<feature type="region of interest" description="Domain III" evidence="1">
    <location>
        <begin position="152"/>
        <end position="197"/>
    </location>
</feature>
<evidence type="ECO:0000255" key="1">
    <source>
        <dbReference type="HAMAP-Rule" id="MF_00031"/>
    </source>
</evidence>
<protein>
    <recommendedName>
        <fullName evidence="1">Holliday junction branch migration complex subunit RuvA</fullName>
    </recommendedName>
</protein>
<comment type="function">
    <text evidence="1">The RuvA-RuvB-RuvC complex processes Holliday junction (HJ) DNA during genetic recombination and DNA repair, while the RuvA-RuvB complex plays an important role in the rescue of blocked DNA replication forks via replication fork reversal (RFR). RuvA specifically binds to HJ cruciform DNA, conferring on it an open structure. The RuvB hexamer acts as an ATP-dependent pump, pulling dsDNA into and through the RuvAB complex. HJ branch migration allows RuvC to scan DNA until it finds its consensus sequence, where it cleaves and resolves the cruciform DNA.</text>
</comment>
<comment type="subunit">
    <text evidence="1">Homotetramer. Forms an RuvA(8)-RuvB(12)-Holliday junction (HJ) complex. HJ DNA is sandwiched between 2 RuvA tetramers; dsDNA enters through RuvA and exits via RuvB. An RuvB hexamer assembles on each DNA strand where it exits the tetramer. Each RuvB hexamer is contacted by two RuvA subunits (via domain III) on 2 adjacent RuvB subunits; this complex drives branch migration. In the full resolvosome a probable DNA-RuvA(4)-RuvB(12)-RuvC(2) complex forms which resolves the HJ.</text>
</comment>
<comment type="subcellular location">
    <subcellularLocation>
        <location evidence="1">Cytoplasm</location>
    </subcellularLocation>
</comment>
<comment type="domain">
    <text evidence="1">Has three domains with a flexible linker between the domains II and III and assumes an 'L' shape. Domain III is highly mobile and contacts RuvB.</text>
</comment>
<comment type="similarity">
    <text evidence="1">Belongs to the RuvA family.</text>
</comment>
<accession>A4XJS2</accession>